<keyword id="KW-0134">Cell wall</keyword>
<keyword id="KW-0349">Heme</keyword>
<keyword id="KW-0408">Iron</keyword>
<keyword id="KW-0479">Metal-binding</keyword>
<keyword id="KW-0572">Peptidoglycan-anchor</keyword>
<keyword id="KW-0964">Secreted</keyword>
<keyword id="KW-0732">Signal</keyword>
<gene>
    <name type="primary">isdC</name>
    <name type="synonym">sirD</name>
    <name type="ordered locus">SAUSA300_1030</name>
</gene>
<organism>
    <name type="scientific">Staphylococcus aureus (strain USA300)</name>
    <dbReference type="NCBI Taxonomy" id="367830"/>
    <lineage>
        <taxon>Bacteria</taxon>
        <taxon>Bacillati</taxon>
        <taxon>Bacillota</taxon>
        <taxon>Bacilli</taxon>
        <taxon>Bacillales</taxon>
        <taxon>Staphylococcaceae</taxon>
        <taxon>Staphylococcus</taxon>
    </lineage>
</organism>
<feature type="signal peptide" evidence="3">
    <location>
        <begin position="1"/>
        <end position="28"/>
    </location>
</feature>
<feature type="chain" id="PRO_0000292563" description="Iron-regulated surface determinant protein C">
    <location>
        <begin position="29"/>
        <end position="192"/>
    </location>
</feature>
<feature type="propeptide" id="PRO_0000292564" description="Removed by sortase B" evidence="2">
    <location>
        <begin position="193"/>
        <end position="227"/>
    </location>
</feature>
<feature type="domain" description="NEAT" evidence="4">
    <location>
        <begin position="29"/>
        <end position="150"/>
    </location>
</feature>
<feature type="region of interest" description="Disordered" evidence="5">
    <location>
        <begin position="149"/>
        <end position="191"/>
    </location>
</feature>
<feature type="short sequence motif" description="NPQTN sorting signal" evidence="2">
    <location>
        <begin position="189"/>
        <end position="193"/>
    </location>
</feature>
<feature type="compositionally biased region" description="Low complexity" evidence="5">
    <location>
        <begin position="161"/>
        <end position="175"/>
    </location>
</feature>
<feature type="binding site" evidence="2">
    <location>
        <position position="47"/>
    </location>
    <ligand>
        <name>heme</name>
        <dbReference type="ChEBI" id="CHEBI:30413"/>
    </ligand>
</feature>
<feature type="binding site" evidence="2">
    <location>
        <position position="48"/>
    </location>
    <ligand>
        <name>heme</name>
        <dbReference type="ChEBI" id="CHEBI:30413"/>
    </ligand>
</feature>
<feature type="binding site" description="axial binding residue" evidence="1">
    <location>
        <position position="132"/>
    </location>
    <ligand>
        <name>heme</name>
        <dbReference type="ChEBI" id="CHEBI:30413"/>
    </ligand>
    <ligandPart>
        <name>Fe</name>
        <dbReference type="ChEBI" id="CHEBI:18248"/>
    </ligandPart>
</feature>
<feature type="binding site" evidence="2">
    <location>
        <position position="136"/>
    </location>
    <ligand>
        <name>heme</name>
        <dbReference type="ChEBI" id="CHEBI:30413"/>
    </ligand>
</feature>
<feature type="modified residue" description="Pentaglycyl murein peptidoglycan amidated threonine" evidence="2">
    <location>
        <position position="192"/>
    </location>
</feature>
<comment type="function">
    <text evidence="1">Involved in heme (porphyrin) scavenging. Binds hemoglobin and almost exclusively free-base protoporphyrin IX. Probably has a role as the central conduit of the isd heme uptake system, i.e. mediates the transfer of the iron-containing nutrient from IsdABH to the membrane translocation system IsdDEF. Hemin-free IsdC (apo-IsdC) acquires hemin from hemin-containing IsdA (holo-IsdA) probably through the activated holo-IsdA-apo-IsdC complex and due to the higher affinity of apo-IsdC for the cofactor. The reaction is reversible (By similarity).</text>
</comment>
<comment type="subunit">
    <text evidence="1">Monomer. Interacts with IsdA (By similarity).</text>
</comment>
<comment type="subcellular location">
    <subcellularLocation>
        <location evidence="1">Secreted</location>
        <location evidence="1">Cell wall</location>
        <topology evidence="1">Peptidoglycan-anchor</topology>
    </subcellularLocation>
    <text evidence="2">Anchored to the cell wall by sortase B (By similarity).</text>
</comment>
<comment type="induction">
    <text evidence="1">Repressed by fur in the presence of iron.</text>
</comment>
<comment type="domain">
    <text evidence="1">The NEAT domain binds Fe(3+) heme iron. Reduction of the high-spin Fe(3+) heme iron to high-spin Fe(2+) results in loss of the heme from the binding site of the protein due to the absence of a proximal histidine (By similarity).</text>
</comment>
<comment type="similarity">
    <text evidence="6">Belongs to the IsdC family.</text>
</comment>
<evidence type="ECO:0000250" key="1"/>
<evidence type="ECO:0000250" key="2">
    <source>
        <dbReference type="UniProtKB" id="Q8KQR1"/>
    </source>
</evidence>
<evidence type="ECO:0000255" key="3"/>
<evidence type="ECO:0000255" key="4">
    <source>
        <dbReference type="PROSITE-ProRule" id="PRU00337"/>
    </source>
</evidence>
<evidence type="ECO:0000256" key="5">
    <source>
        <dbReference type="SAM" id="MobiDB-lite"/>
    </source>
</evidence>
<evidence type="ECO:0000305" key="6"/>
<name>ISDC_STAA3</name>
<proteinExistence type="inferred from homology"/>
<accession>Q2FHV0</accession>
<dbReference type="EMBL" id="CP000255">
    <property type="protein sequence ID" value="ABD20415.1"/>
    <property type="molecule type" value="Genomic_DNA"/>
</dbReference>
<dbReference type="RefSeq" id="WP_000789821.1">
    <property type="nucleotide sequence ID" value="NZ_CP027476.1"/>
</dbReference>
<dbReference type="SMR" id="Q2FHV0"/>
<dbReference type="KEGG" id="saa:SAUSA300_1030"/>
<dbReference type="HOGENOM" id="CLU_092243_1_0_9"/>
<dbReference type="OMA" id="HNYTIRF"/>
<dbReference type="Proteomes" id="UP000001939">
    <property type="component" value="Chromosome"/>
</dbReference>
<dbReference type="GO" id="GO:0005576">
    <property type="term" value="C:extracellular region"/>
    <property type="evidence" value="ECO:0007669"/>
    <property type="project" value="UniProtKB-KW"/>
</dbReference>
<dbReference type="GO" id="GO:0009274">
    <property type="term" value="C:peptidoglycan-based cell wall"/>
    <property type="evidence" value="ECO:0007669"/>
    <property type="project" value="InterPro"/>
</dbReference>
<dbReference type="GO" id="GO:0030492">
    <property type="term" value="F:hemoglobin binding"/>
    <property type="evidence" value="ECO:0007669"/>
    <property type="project" value="InterPro"/>
</dbReference>
<dbReference type="GO" id="GO:0046872">
    <property type="term" value="F:metal ion binding"/>
    <property type="evidence" value="ECO:0007669"/>
    <property type="project" value="UniProtKB-KW"/>
</dbReference>
<dbReference type="GO" id="GO:0015886">
    <property type="term" value="P:heme transport"/>
    <property type="evidence" value="ECO:0007669"/>
    <property type="project" value="InterPro"/>
</dbReference>
<dbReference type="CDD" id="cd06920">
    <property type="entry name" value="NEAT"/>
    <property type="match status" value="1"/>
</dbReference>
<dbReference type="Gene3D" id="2.60.40.1850">
    <property type="match status" value="1"/>
</dbReference>
<dbReference type="InterPro" id="IPR019909">
    <property type="entry name" value="Haem_uptake_protein_IsdC"/>
</dbReference>
<dbReference type="InterPro" id="IPR050436">
    <property type="entry name" value="IsdA"/>
</dbReference>
<dbReference type="InterPro" id="IPR006635">
    <property type="entry name" value="NEAT_dom"/>
</dbReference>
<dbReference type="InterPro" id="IPR037250">
    <property type="entry name" value="NEAT_dom_sf"/>
</dbReference>
<dbReference type="InterPro" id="IPR017505">
    <property type="entry name" value="Sortase_SrtB_sig_NPQTN"/>
</dbReference>
<dbReference type="NCBIfam" id="TIGR03656">
    <property type="entry name" value="IsdC"/>
    <property type="match status" value="1"/>
</dbReference>
<dbReference type="NCBIfam" id="TIGR03068">
    <property type="entry name" value="srtB_sig_NPQTN"/>
    <property type="match status" value="1"/>
</dbReference>
<dbReference type="PANTHER" id="PTHR37824">
    <property type="entry name" value="IRON-REGULATED SURFACE DETERMINANT PROTEIN C"/>
    <property type="match status" value="1"/>
</dbReference>
<dbReference type="PANTHER" id="PTHR37824:SF1">
    <property type="entry name" value="IRON-REGULATED SURFACE DETERMINANT PROTEIN C"/>
    <property type="match status" value="1"/>
</dbReference>
<dbReference type="Pfam" id="PF05031">
    <property type="entry name" value="NEAT"/>
    <property type="match status" value="1"/>
</dbReference>
<dbReference type="SMART" id="SM00725">
    <property type="entry name" value="NEAT"/>
    <property type="match status" value="1"/>
</dbReference>
<dbReference type="SUPFAM" id="SSF158911">
    <property type="entry name" value="NEAT domain-like"/>
    <property type="match status" value="1"/>
</dbReference>
<dbReference type="PROSITE" id="PS50978">
    <property type="entry name" value="NEAT"/>
    <property type="match status" value="1"/>
</dbReference>
<sequence length="227" mass="24855">MKNILKVFNTTILALIIIIATFSNSANAADSGTLNYEVYKYNTNDTSIANDYFNKPAKYIKKNGKLYVQITVNHSHWITGMSIEGHKENIISKNTAKDERTSEFEVSKLNGKIDGKIDVYIDEKVNGKPFKYDHHYNITYKFNGPTDVAGANAPGKDDKNSASGSDKGSDGTTTGQSESNSSNKDKVENPQTNAGTPAYIYAIPVASLALLIAITLFVRKKSKGNVE</sequence>
<protein>
    <recommendedName>
        <fullName>Iron-regulated surface determinant protein C</fullName>
    </recommendedName>
    <alternativeName>
        <fullName>Staphylococcal iron-regulated protein D</fullName>
    </alternativeName>
</protein>
<reference key="1">
    <citation type="journal article" date="2006" name="Lancet">
        <title>Complete genome sequence of USA300, an epidemic clone of community-acquired meticillin-resistant Staphylococcus aureus.</title>
        <authorList>
            <person name="Diep B.A."/>
            <person name="Gill S.R."/>
            <person name="Chang R.F."/>
            <person name="Phan T.H."/>
            <person name="Chen J.H."/>
            <person name="Davidson M.G."/>
            <person name="Lin F."/>
            <person name="Lin J."/>
            <person name="Carleton H.A."/>
            <person name="Mongodin E.F."/>
            <person name="Sensabaugh G.F."/>
            <person name="Perdreau-Remington F."/>
        </authorList>
    </citation>
    <scope>NUCLEOTIDE SEQUENCE [LARGE SCALE GENOMIC DNA]</scope>
    <source>
        <strain>USA300</strain>
    </source>
</reference>